<reference key="1">
    <citation type="journal article" date="1994" name="Mol. Biol. Cell">
        <title>Nuclear mRNA accumulation causes nucleolar fragmentation in yeast mtr2 mutant.</title>
        <authorList>
            <person name="Kadowaki T."/>
            <person name="Hitomi M."/>
            <person name="Chen S."/>
            <person name="Tartakoff A.M."/>
        </authorList>
    </citation>
    <scope>NUCLEOTIDE SEQUENCE [GENOMIC DNA]</scope>
</reference>
<reference key="2">
    <citation type="journal article" date="1993" name="Yeast">
        <title>Sequencing and analysis of 51.6 kilobases on the left arm of chromosome XI from Saccharomyces cerevisiae reveals 23 open reading frames including the FAS1 gene.</title>
        <authorList>
            <person name="Wiemann S."/>
            <person name="Voss H."/>
            <person name="Schwager C."/>
            <person name="Rupp T."/>
            <person name="Stegemann J."/>
            <person name="Zimmermann J."/>
            <person name="Grothues D."/>
            <person name="Sensen C."/>
            <person name="Erfle H."/>
            <person name="Hewitt N."/>
            <person name="Banrevi A."/>
            <person name="Ansorge W."/>
        </authorList>
    </citation>
    <scope>NUCLEOTIDE SEQUENCE [GENOMIC DNA]</scope>
</reference>
<reference key="3">
    <citation type="journal article" date="1994" name="Nature">
        <title>Complete DNA sequence of yeast chromosome XI.</title>
        <authorList>
            <person name="Dujon B."/>
            <person name="Alexandraki D."/>
            <person name="Andre B."/>
            <person name="Ansorge W."/>
            <person name="Baladron V."/>
            <person name="Ballesta J.P.G."/>
            <person name="Banrevi A."/>
            <person name="Bolle P.-A."/>
            <person name="Bolotin-Fukuhara M."/>
            <person name="Bossier P."/>
            <person name="Bou G."/>
            <person name="Boyer J."/>
            <person name="Buitrago M.J."/>
            <person name="Cheret G."/>
            <person name="Colleaux L."/>
            <person name="Daignan-Fornier B."/>
            <person name="del Rey F."/>
            <person name="Dion C."/>
            <person name="Domdey H."/>
            <person name="Duesterhoeft A."/>
            <person name="Duesterhus S."/>
            <person name="Entian K.-D."/>
            <person name="Erfle H."/>
            <person name="Esteban P.F."/>
            <person name="Feldmann H."/>
            <person name="Fernandes L."/>
            <person name="Fobo G.M."/>
            <person name="Fritz C."/>
            <person name="Fukuhara H."/>
            <person name="Gabel C."/>
            <person name="Gaillon L."/>
            <person name="Garcia-Cantalejo J.M."/>
            <person name="Garcia-Ramirez J.J."/>
            <person name="Gent M.E."/>
            <person name="Ghazvini M."/>
            <person name="Goffeau A."/>
            <person name="Gonzalez A."/>
            <person name="Grothues D."/>
            <person name="Guerreiro P."/>
            <person name="Hegemann J.H."/>
            <person name="Hewitt N."/>
            <person name="Hilger F."/>
            <person name="Hollenberg C.P."/>
            <person name="Horaitis O."/>
            <person name="Indge K.J."/>
            <person name="Jacquier A."/>
            <person name="James C.M."/>
            <person name="Jauniaux J.-C."/>
            <person name="Jimenez A."/>
            <person name="Keuchel H."/>
            <person name="Kirchrath L."/>
            <person name="Kleine K."/>
            <person name="Koetter P."/>
            <person name="Legrain P."/>
            <person name="Liebl S."/>
            <person name="Louis E.J."/>
            <person name="Maia e Silva A."/>
            <person name="Marck C."/>
            <person name="Monnier A.-L."/>
            <person name="Moestl D."/>
            <person name="Mueller S."/>
            <person name="Obermaier B."/>
            <person name="Oliver S.G."/>
            <person name="Pallier C."/>
            <person name="Pascolo S."/>
            <person name="Pfeiffer F."/>
            <person name="Philippsen P."/>
            <person name="Planta R.J."/>
            <person name="Pohl F.M."/>
            <person name="Pohl T.M."/>
            <person name="Poehlmann R."/>
            <person name="Portetelle D."/>
            <person name="Purnelle B."/>
            <person name="Puzos V."/>
            <person name="Ramezani Rad M."/>
            <person name="Rasmussen S.W."/>
            <person name="Remacha M.A."/>
            <person name="Revuelta J.L."/>
            <person name="Richard G.-F."/>
            <person name="Rieger M."/>
            <person name="Rodrigues-Pousada C."/>
            <person name="Rose M."/>
            <person name="Rupp T."/>
            <person name="Santos M.A."/>
            <person name="Schwager C."/>
            <person name="Sensen C."/>
            <person name="Skala J."/>
            <person name="Soares H."/>
            <person name="Sor F."/>
            <person name="Stegemann J."/>
            <person name="Tettelin H."/>
            <person name="Thierry A."/>
            <person name="Tzermia M."/>
            <person name="Urrestarazu L.A."/>
            <person name="van Dyck L."/>
            <person name="van Vliet-Reedijk J.C."/>
            <person name="Valens M."/>
            <person name="Vandenbol M."/>
            <person name="Vilela C."/>
            <person name="Vissers S."/>
            <person name="von Wettstein D."/>
            <person name="Voss H."/>
            <person name="Wiemann S."/>
            <person name="Xu G."/>
            <person name="Zimmermann J."/>
            <person name="Haasemann M."/>
            <person name="Becker I."/>
            <person name="Mewes H.-W."/>
        </authorList>
    </citation>
    <scope>NUCLEOTIDE SEQUENCE [LARGE SCALE GENOMIC DNA]</scope>
    <source>
        <strain>ATCC 204508 / S288c</strain>
    </source>
</reference>
<reference key="4">
    <citation type="journal article" date="2014" name="G3 (Bethesda)">
        <title>The reference genome sequence of Saccharomyces cerevisiae: Then and now.</title>
        <authorList>
            <person name="Engel S.R."/>
            <person name="Dietrich F.S."/>
            <person name="Fisk D.G."/>
            <person name="Binkley G."/>
            <person name="Balakrishnan R."/>
            <person name="Costanzo M.C."/>
            <person name="Dwight S.S."/>
            <person name="Hitz B.C."/>
            <person name="Karra K."/>
            <person name="Nash R.S."/>
            <person name="Weng S."/>
            <person name="Wong E.D."/>
            <person name="Lloyd P."/>
            <person name="Skrzypek M.S."/>
            <person name="Miyasato S.R."/>
            <person name="Simison M."/>
            <person name="Cherry J.M."/>
        </authorList>
    </citation>
    <scope>GENOME REANNOTATION</scope>
    <source>
        <strain>ATCC 204508 / S288c</strain>
    </source>
</reference>
<reference key="5">
    <citation type="journal article" date="2007" name="Genome Res.">
        <title>Approaching a complete repository of sequence-verified protein-encoding clones for Saccharomyces cerevisiae.</title>
        <authorList>
            <person name="Hu Y."/>
            <person name="Rolfs A."/>
            <person name="Bhullar B."/>
            <person name="Murthy T.V.S."/>
            <person name="Zhu C."/>
            <person name="Berger M.F."/>
            <person name="Camargo A.A."/>
            <person name="Kelley F."/>
            <person name="McCarron S."/>
            <person name="Jepson D."/>
            <person name="Richardson A."/>
            <person name="Raphael J."/>
            <person name="Moreira D."/>
            <person name="Taycher E."/>
            <person name="Zuo D."/>
            <person name="Mohr S."/>
            <person name="Kane M.F."/>
            <person name="Williamson J."/>
            <person name="Simpson A.J.G."/>
            <person name="Bulyk M.L."/>
            <person name="Harlow E."/>
            <person name="Marsischky G."/>
            <person name="Kolodner R.D."/>
            <person name="LaBaer J."/>
        </authorList>
    </citation>
    <scope>NUCLEOTIDE SEQUENCE [GENOMIC DNA]</scope>
    <source>
        <strain>ATCC 204508 / S288c</strain>
    </source>
</reference>
<reference key="6">
    <citation type="journal article" date="2008" name="Mol. Cell. Proteomics">
        <title>A multidimensional chromatography technology for in-depth phosphoproteome analysis.</title>
        <authorList>
            <person name="Albuquerque C.P."/>
            <person name="Smolka M.B."/>
            <person name="Payne S.H."/>
            <person name="Bafna V."/>
            <person name="Eng J."/>
            <person name="Zhou H."/>
        </authorList>
    </citation>
    <scope>PHOSPHORYLATION [LARGE SCALE ANALYSIS] AT THR-125</scope>
    <scope>IDENTIFICATION BY MASS SPECTROMETRY [LARGE SCALE ANALYSIS]</scope>
</reference>
<reference key="7">
    <citation type="journal article" date="2009" name="Science">
        <title>Global analysis of Cdk1 substrate phosphorylation sites provides insights into evolution.</title>
        <authorList>
            <person name="Holt L.J."/>
            <person name="Tuch B.B."/>
            <person name="Villen J."/>
            <person name="Johnson A.D."/>
            <person name="Gygi S.P."/>
            <person name="Morgan D.O."/>
        </authorList>
    </citation>
    <scope>PHOSPHORYLATION [LARGE SCALE ANALYSIS] AT THR-125</scope>
    <scope>IDENTIFICATION BY MASS SPECTROMETRY [LARGE SCALE ANALYSIS]</scope>
</reference>
<reference key="8">
    <citation type="journal article" date="2003" name="EMBO Rep.">
        <title>Structural similarity in the absence of sequence homology of the messenger RNA export factors Mtr2 and p15.</title>
        <authorList>
            <person name="Fribourg S."/>
            <person name="Conti E."/>
        </authorList>
    </citation>
    <scope>X-RAY CRYSTALLOGRAPHY (2.8 ANGSTROMS) OF 14-178 IN COMPLEX WITH MEX67</scope>
</reference>
<comment type="function">
    <text>Affects mRNA transport from the nucleus to the cytoplasm.</text>
</comment>
<comment type="subunit">
    <text evidence="2">Interacts with MEX67.</text>
</comment>
<comment type="interaction">
    <interactant intactId="EBI-11585">
        <id>P34232</id>
    </interactant>
    <interactant intactId="EBI-11642">
        <id>Q99257</id>
        <label>MEX67</label>
    </interactant>
    <organismsDiffer>false</organismsDiffer>
    <experiments>3</experiments>
</comment>
<comment type="subcellular location">
    <subcellularLocation>
        <location>Nucleus</location>
    </subcellularLocation>
</comment>
<proteinExistence type="evidence at protein level"/>
<keyword id="KW-0002">3D-structure</keyword>
<keyword id="KW-0539">Nucleus</keyword>
<keyword id="KW-0597">Phosphoprotein</keyword>
<keyword id="KW-1185">Reference proteome</keyword>
<keyword id="KW-0813">Transport</keyword>
<name>MTR2_YEAST</name>
<feature type="chain" id="PRO_0000096634" description="mRNA transport regulator MTR2">
    <location>
        <begin position="1"/>
        <end position="184"/>
    </location>
</feature>
<feature type="region of interest" description="Disordered" evidence="1">
    <location>
        <begin position="111"/>
        <end position="135"/>
    </location>
</feature>
<feature type="compositionally biased region" description="Polar residues" evidence="1">
    <location>
        <begin position="120"/>
        <end position="129"/>
    </location>
</feature>
<feature type="modified residue" description="Phosphothreonine" evidence="3 4">
    <location>
        <position position="125"/>
    </location>
</feature>
<feature type="helix" evidence="5">
    <location>
        <begin position="15"/>
        <end position="31"/>
    </location>
</feature>
<feature type="helix" evidence="5">
    <location>
        <begin position="39"/>
        <end position="42"/>
    </location>
</feature>
<feature type="strand" evidence="6">
    <location>
        <begin position="47"/>
        <end position="49"/>
    </location>
</feature>
<feature type="strand" evidence="5">
    <location>
        <begin position="52"/>
        <end position="54"/>
    </location>
</feature>
<feature type="strand" evidence="5">
    <location>
        <begin position="57"/>
        <end position="60"/>
    </location>
</feature>
<feature type="helix" evidence="5">
    <location>
        <begin position="62"/>
        <end position="72"/>
    </location>
</feature>
<feature type="strand" evidence="5">
    <location>
        <begin position="77"/>
        <end position="88"/>
    </location>
</feature>
<feature type="turn" evidence="5">
    <location>
        <begin position="89"/>
        <end position="92"/>
    </location>
</feature>
<feature type="strand" evidence="5">
    <location>
        <begin position="93"/>
        <end position="103"/>
    </location>
</feature>
<feature type="strand" evidence="6">
    <location>
        <begin position="115"/>
        <end position="117"/>
    </location>
</feature>
<feature type="strand" evidence="5">
    <location>
        <begin position="145"/>
        <end position="154"/>
    </location>
</feature>
<feature type="helix" evidence="5">
    <location>
        <begin position="155"/>
        <end position="159"/>
    </location>
</feature>
<feature type="strand" evidence="5">
    <location>
        <begin position="166"/>
        <end position="175"/>
    </location>
</feature>
<dbReference type="EMBL" id="S77467">
    <property type="protein sequence ID" value="AAB33484.1"/>
    <property type="molecule type" value="Genomic_DNA"/>
</dbReference>
<dbReference type="EMBL" id="X74151">
    <property type="protein sequence ID" value="CAA52252.1"/>
    <property type="molecule type" value="Genomic_DNA"/>
</dbReference>
<dbReference type="EMBL" id="Z28186">
    <property type="protein sequence ID" value="CAA82029.1"/>
    <property type="molecule type" value="Genomic_DNA"/>
</dbReference>
<dbReference type="EMBL" id="AY558555">
    <property type="protein sequence ID" value="AAS56881.1"/>
    <property type="molecule type" value="Genomic_DNA"/>
</dbReference>
<dbReference type="EMBL" id="BK006944">
    <property type="protein sequence ID" value="DAA08980.1"/>
    <property type="molecule type" value="Genomic_DNA"/>
</dbReference>
<dbReference type="PIR" id="S34684">
    <property type="entry name" value="S34684"/>
</dbReference>
<dbReference type="RefSeq" id="NP_012735.1">
    <property type="nucleotide sequence ID" value="NM_001179752.1"/>
</dbReference>
<dbReference type="PDB" id="1OF5">
    <property type="method" value="X-ray"/>
    <property type="resolution" value="2.80 A"/>
    <property type="chains" value="B=1-184"/>
</dbReference>
<dbReference type="PDB" id="4WWU">
    <property type="method" value="X-ray"/>
    <property type="resolution" value="3.30 A"/>
    <property type="chains" value="C/F/I/L=1-184"/>
</dbReference>
<dbReference type="PDB" id="8HBN">
    <property type="method" value="EM"/>
    <property type="resolution" value="3.81 A"/>
    <property type="chains" value="B=1-184"/>
</dbReference>
<dbReference type="PDB" id="8HFR">
    <property type="method" value="EM"/>
    <property type="resolution" value="2.64 A"/>
    <property type="chains" value="Bt/DK/FR=1-184"/>
</dbReference>
<dbReference type="PDBsum" id="1OF5"/>
<dbReference type="PDBsum" id="4WWU"/>
<dbReference type="PDBsum" id="8HBN"/>
<dbReference type="PDBsum" id="8HFR"/>
<dbReference type="EMDB" id="EMD-34638"/>
<dbReference type="EMDB" id="EMD-34640"/>
<dbReference type="EMDB" id="EMD-34725"/>
<dbReference type="SMR" id="P34232"/>
<dbReference type="BioGRID" id="33936">
    <property type="interactions" value="165"/>
</dbReference>
<dbReference type="ComplexPortal" id="CPX-1142">
    <property type="entry name" value="MEX67-MTR2 mRNA nuclear export factor complex"/>
</dbReference>
<dbReference type="DIP" id="DIP-4856N"/>
<dbReference type="FunCoup" id="P34232">
    <property type="interactions" value="212"/>
</dbReference>
<dbReference type="IntAct" id="P34232">
    <property type="interactions" value="14"/>
</dbReference>
<dbReference type="MINT" id="P34232"/>
<dbReference type="STRING" id="4932.YKL186C"/>
<dbReference type="TCDB" id="1.I.1.1.1">
    <property type="family name" value="the nuclear pore complex (npc) family"/>
</dbReference>
<dbReference type="iPTMnet" id="P34232"/>
<dbReference type="PaxDb" id="4932-YKL186C"/>
<dbReference type="PeptideAtlas" id="P34232"/>
<dbReference type="EnsemblFungi" id="YKL186C_mRNA">
    <property type="protein sequence ID" value="YKL186C"/>
    <property type="gene ID" value="YKL186C"/>
</dbReference>
<dbReference type="GeneID" id="853649"/>
<dbReference type="KEGG" id="sce:YKL186C"/>
<dbReference type="AGR" id="SGD:S000001669"/>
<dbReference type="SGD" id="S000001669">
    <property type="gene designation" value="MTR2"/>
</dbReference>
<dbReference type="VEuPathDB" id="FungiDB:YKL186C"/>
<dbReference type="eggNOG" id="ENOG502RZK7">
    <property type="taxonomic scope" value="Eukaryota"/>
</dbReference>
<dbReference type="HOGENOM" id="CLU_128326_0_0_1"/>
<dbReference type="InParanoid" id="P34232"/>
<dbReference type="OMA" id="FDCHLIP"/>
<dbReference type="OrthoDB" id="25408at2759"/>
<dbReference type="BioCyc" id="YEAST:G3O-31949-MONOMER"/>
<dbReference type="Reactome" id="R-SCE-159236">
    <property type="pathway name" value="Transport of Mature mRNA derived from an Intron-Containing Transcript"/>
</dbReference>
<dbReference type="BioGRID-ORCS" id="853649">
    <property type="hits" value="6 hits in 10 CRISPR screens"/>
</dbReference>
<dbReference type="EvolutionaryTrace" id="P34232"/>
<dbReference type="PRO" id="PR:P34232"/>
<dbReference type="Proteomes" id="UP000002311">
    <property type="component" value="Chromosome XI"/>
</dbReference>
<dbReference type="RNAct" id="P34232">
    <property type="molecule type" value="protein"/>
</dbReference>
<dbReference type="GO" id="GO:0044613">
    <property type="term" value="C:nuclear pore central transport channel"/>
    <property type="evidence" value="ECO:0000318"/>
    <property type="project" value="GO_Central"/>
</dbReference>
<dbReference type="GO" id="GO:0042272">
    <property type="term" value="C:nuclear RNA export factor complex"/>
    <property type="evidence" value="ECO:0000353"/>
    <property type="project" value="ComplexPortal"/>
</dbReference>
<dbReference type="GO" id="GO:0005634">
    <property type="term" value="C:nucleus"/>
    <property type="evidence" value="ECO:0000303"/>
    <property type="project" value="ComplexPortal"/>
</dbReference>
<dbReference type="GO" id="GO:0006406">
    <property type="term" value="P:mRNA export from nucleus"/>
    <property type="evidence" value="ECO:0000303"/>
    <property type="project" value="ComplexPortal"/>
</dbReference>
<dbReference type="GO" id="GO:0016973">
    <property type="term" value="P:poly(A)+ mRNA export from nucleus"/>
    <property type="evidence" value="ECO:0000315"/>
    <property type="project" value="SGD"/>
</dbReference>
<dbReference type="GO" id="GO:0000055">
    <property type="term" value="P:ribosomal large subunit export from nucleus"/>
    <property type="evidence" value="ECO:0000315"/>
    <property type="project" value="SGD"/>
</dbReference>
<dbReference type="GO" id="GO:0000056">
    <property type="term" value="P:ribosomal small subunit export from nucleus"/>
    <property type="evidence" value="ECO:0000314"/>
    <property type="project" value="ComplexPortal"/>
</dbReference>
<dbReference type="GO" id="GO:0006409">
    <property type="term" value="P:tRNA export from nucleus"/>
    <property type="evidence" value="ECO:0000315"/>
    <property type="project" value="SGD"/>
</dbReference>
<dbReference type="GO" id="GO:0008033">
    <property type="term" value="P:tRNA processing"/>
    <property type="evidence" value="ECO:0000315"/>
    <property type="project" value="SGD"/>
</dbReference>
<dbReference type="FunFam" id="3.10.450.50:FF:000018">
    <property type="entry name" value="mRNA transport regulator"/>
    <property type="match status" value="1"/>
</dbReference>
<dbReference type="Gene3D" id="3.10.450.50">
    <property type="match status" value="1"/>
</dbReference>
<dbReference type="InterPro" id="IPR032710">
    <property type="entry name" value="NTF2-like_dom_sf"/>
</dbReference>
<dbReference type="InterPro" id="IPR019488">
    <property type="entry name" value="Nucl_pore_RNA_shuttling_Mtr2"/>
</dbReference>
<dbReference type="Pfam" id="PF10429">
    <property type="entry name" value="Mtr2"/>
    <property type="match status" value="1"/>
</dbReference>
<dbReference type="SUPFAM" id="SSF54427">
    <property type="entry name" value="NTF2-like"/>
    <property type="match status" value="1"/>
</dbReference>
<sequence length="184" mass="20784">MNTNSNTMVMNDANQAQITATFTKKILAHLDDPDSNKLAQFVQLFNPNNCRIIFNATPFAQATVFLQMWQNQVVQTQHALTGVDYHAIPGSGTLICNVNCKVRFDESGRDKMGQDATVPIQPNNTGNRNRPNDMNKPRPLWGPYFGISLQLIIDDRIFRNDFNGVISGFNYNMVYKPEDSLLKI</sequence>
<accession>P34232</accession>
<accession>D6VX14</accession>
<evidence type="ECO:0000256" key="1">
    <source>
        <dbReference type="SAM" id="MobiDB-lite"/>
    </source>
</evidence>
<evidence type="ECO:0000269" key="2">
    <source>
    </source>
</evidence>
<evidence type="ECO:0007744" key="3">
    <source>
    </source>
</evidence>
<evidence type="ECO:0007744" key="4">
    <source>
    </source>
</evidence>
<evidence type="ECO:0007829" key="5">
    <source>
        <dbReference type="PDB" id="1OF5"/>
    </source>
</evidence>
<evidence type="ECO:0007829" key="6">
    <source>
        <dbReference type="PDB" id="4WWU"/>
    </source>
</evidence>
<gene>
    <name type="primary">MTR2</name>
    <name type="ordered locus">YKL186C</name>
</gene>
<organism>
    <name type="scientific">Saccharomyces cerevisiae (strain ATCC 204508 / S288c)</name>
    <name type="common">Baker's yeast</name>
    <dbReference type="NCBI Taxonomy" id="559292"/>
    <lineage>
        <taxon>Eukaryota</taxon>
        <taxon>Fungi</taxon>
        <taxon>Dikarya</taxon>
        <taxon>Ascomycota</taxon>
        <taxon>Saccharomycotina</taxon>
        <taxon>Saccharomycetes</taxon>
        <taxon>Saccharomycetales</taxon>
        <taxon>Saccharomycetaceae</taxon>
        <taxon>Saccharomyces</taxon>
    </lineage>
</organism>
<protein>
    <recommendedName>
        <fullName>mRNA transport regulator MTR2</fullName>
    </recommendedName>
</protein>